<accession>P34940</accession>
<dbReference type="EMBL" id="X75420">
    <property type="protein sequence ID" value="CAA53172.1"/>
    <property type="molecule type" value="Genomic_DNA"/>
</dbReference>
<dbReference type="PIR" id="S38426">
    <property type="entry name" value="S38426"/>
</dbReference>
<dbReference type="SMR" id="P34940"/>
<dbReference type="GO" id="GO:0005759">
    <property type="term" value="C:mitochondrial matrix"/>
    <property type="evidence" value="ECO:0007669"/>
    <property type="project" value="UniProtKB-SubCell"/>
</dbReference>
<dbReference type="GO" id="GO:0005524">
    <property type="term" value="F:ATP binding"/>
    <property type="evidence" value="ECO:0007669"/>
    <property type="project" value="UniProtKB-KW"/>
</dbReference>
<dbReference type="GO" id="GO:0140662">
    <property type="term" value="F:ATP-dependent protein folding chaperone"/>
    <property type="evidence" value="ECO:0007669"/>
    <property type="project" value="InterPro"/>
</dbReference>
<dbReference type="GO" id="GO:0042026">
    <property type="term" value="P:protein refolding"/>
    <property type="evidence" value="ECO:0007669"/>
    <property type="project" value="InterPro"/>
</dbReference>
<dbReference type="CDD" id="cd03344">
    <property type="entry name" value="GroEL"/>
    <property type="match status" value="1"/>
</dbReference>
<dbReference type="FunFam" id="3.50.7.10:FF:000001">
    <property type="entry name" value="60 kDa chaperonin"/>
    <property type="match status" value="1"/>
</dbReference>
<dbReference type="Gene3D" id="3.50.7.10">
    <property type="entry name" value="GroEL"/>
    <property type="match status" value="1"/>
</dbReference>
<dbReference type="Gene3D" id="1.10.560.10">
    <property type="entry name" value="GroEL-like equatorial domain"/>
    <property type="match status" value="1"/>
</dbReference>
<dbReference type="Gene3D" id="3.30.260.10">
    <property type="entry name" value="TCP-1-like chaperonin intermediate domain"/>
    <property type="match status" value="1"/>
</dbReference>
<dbReference type="InterPro" id="IPR001844">
    <property type="entry name" value="Cpn60/GroEL"/>
</dbReference>
<dbReference type="InterPro" id="IPR002423">
    <property type="entry name" value="Cpn60/GroEL/TCP-1"/>
</dbReference>
<dbReference type="InterPro" id="IPR027409">
    <property type="entry name" value="GroEL-like_apical_dom_sf"/>
</dbReference>
<dbReference type="InterPro" id="IPR027413">
    <property type="entry name" value="GROEL-like_equatorial_sf"/>
</dbReference>
<dbReference type="InterPro" id="IPR027410">
    <property type="entry name" value="TCP-1-like_intermed_sf"/>
</dbReference>
<dbReference type="NCBIfam" id="NF000592">
    <property type="entry name" value="PRK00013.1"/>
    <property type="match status" value="1"/>
</dbReference>
<dbReference type="NCBIfam" id="NF009487">
    <property type="entry name" value="PRK12849.1"/>
    <property type="match status" value="1"/>
</dbReference>
<dbReference type="PANTHER" id="PTHR45633">
    <property type="entry name" value="60 KDA HEAT SHOCK PROTEIN, MITOCHONDRIAL"/>
    <property type="match status" value="1"/>
</dbReference>
<dbReference type="Pfam" id="PF00118">
    <property type="entry name" value="Cpn60_TCP1"/>
    <property type="match status" value="1"/>
</dbReference>
<dbReference type="PRINTS" id="PR00298">
    <property type="entry name" value="CHAPERONIN60"/>
</dbReference>
<dbReference type="SUPFAM" id="SSF52029">
    <property type="entry name" value="GroEL apical domain-like"/>
    <property type="match status" value="1"/>
</dbReference>
<dbReference type="SUPFAM" id="SSF48592">
    <property type="entry name" value="GroEL equatorial domain-like"/>
    <property type="match status" value="1"/>
</dbReference>
<dbReference type="SUPFAM" id="SSF54849">
    <property type="entry name" value="GroEL-intermediate domain like"/>
    <property type="match status" value="1"/>
</dbReference>
<name>CH60_PLAFG</name>
<evidence type="ECO:0000250" key="1"/>
<evidence type="ECO:0000255" key="2"/>
<evidence type="ECO:0000256" key="3">
    <source>
        <dbReference type="SAM" id="MobiDB-lite"/>
    </source>
</evidence>
<evidence type="ECO:0000305" key="4"/>
<reference key="1">
    <citation type="journal article" date="1994" name="Mol. Biochem. Parasitol.">
        <title>Isolation and characterization of a chaperonin-60 gene of the human malaria parasite Plasmodium falciparum.</title>
        <authorList>
            <person name="Holloway S.P."/>
            <person name="Min W."/>
            <person name="Inselburg J.I."/>
        </authorList>
    </citation>
    <scope>NUCLEOTIDE SEQUENCE [GENOMIC DNA]</scope>
</reference>
<proteinExistence type="inferred from homology"/>
<sequence>MRMKRIHILFVVIFLLCLRYGYSIKKKRSPNNKNRLFINKRLKYINSKIISRRKENYVKMKMTENKVKGKDIIYGNECRNELLKGILTVSDVVKLTLGPRGRNVLLEKEYGSPLIINDGVTIAKNISLKDRKKNNGVKLMQESTNISNDKAGDGTSSTALMTATITKKGIEQVNRNHNPIPIQRGIQLASKMIIEKIKSLSTPIKTYKDILNIATIASNNDVHMGQIIANAYDKLGKNAAIILDDNADINDKLEFTEGYNFDRGIINPYLLYNENKDYIEYSNVSTLITDQNIDNIQSILPILEIFAKNKQPLCIIADDFSNEVLQTLIINKLKGAIKVLCIVTNSKYISADVGLDLNNLHNNMSSFDNNYLSLLGSANTLIVKKDRTSLITKEEYKKEIDERINVLKKEYEETTSKYDKEKLNERIAALSGGIAKILIGGNSETEQKERKFKYEDATNAVKSAIDIGYVPGGGVTYLEIIKSNFIQEIHKKIEEDLQISSNNDEKKYLELIGNLESEMELQKMGANIVVSSLDVITKQIADNAGVNGDNVVKIILNSKDKYGFGYDVNTNKFVNMVEKGIIDSTNVIISVIKNSCSIASMVLTTECMMVDHEKKDKGILDSSINSPNYLSKHRRTYKHKLHDDEDTDEDDEEDEDDEDDEDDLDDDDYDDEDEEDEEDEEDEDDEDDEDSMNDEYNYDE</sequence>
<keyword id="KW-0067">ATP-binding</keyword>
<keyword id="KW-0143">Chaperone</keyword>
<keyword id="KW-0496">Mitochondrion</keyword>
<keyword id="KW-0547">Nucleotide-binding</keyword>
<keyword id="KW-0346">Stress response</keyword>
<keyword id="KW-0809">Transit peptide</keyword>
<comment type="function">
    <text>Implicated in mitochondrial protein import and macromolecular assembly. May facilitate the correct folding of imported proteins. May also prevent misfolding and promote the refolding and proper assembly of unfolded polypeptides generated under stress conditions in the mitochondrial matrix.</text>
</comment>
<comment type="subcellular location">
    <subcellularLocation>
        <location evidence="1">Mitochondrion matrix</location>
    </subcellularLocation>
</comment>
<comment type="similarity">
    <text evidence="4">Belongs to the chaperonin (HSP60) family.</text>
</comment>
<organism>
    <name type="scientific">Plasmodium falciparum (isolate FCR-3 / Gambia)</name>
    <dbReference type="NCBI Taxonomy" id="5838"/>
    <lineage>
        <taxon>Eukaryota</taxon>
        <taxon>Sar</taxon>
        <taxon>Alveolata</taxon>
        <taxon>Apicomplexa</taxon>
        <taxon>Aconoidasida</taxon>
        <taxon>Haemosporida</taxon>
        <taxon>Plasmodiidae</taxon>
        <taxon>Plasmodium</taxon>
        <taxon>Plasmodium (Laverania)</taxon>
    </lineage>
</organism>
<feature type="transit peptide" description="Mitochondrion" evidence="2">
    <location>
        <begin position="1"/>
        <end position="9"/>
    </location>
</feature>
<feature type="chain" id="PRO_0000005037" description="Chaperonin CPN60, mitochondrial">
    <location>
        <begin position="10"/>
        <end position="700"/>
    </location>
</feature>
<feature type="region of interest" description="Disordered" evidence="3">
    <location>
        <begin position="636"/>
        <end position="700"/>
    </location>
</feature>
<feature type="compositionally biased region" description="Acidic residues" evidence="3">
    <location>
        <begin position="644"/>
        <end position="700"/>
    </location>
</feature>
<protein>
    <recommendedName>
        <fullName>Chaperonin CPN60, mitochondrial</fullName>
    </recommendedName>
</protein>